<protein>
    <recommendedName>
        <fullName>Heat shock protein 70 homolog lhs1</fullName>
        <ecNumber>3.6.1.-</ecNumber>
    </recommendedName>
</protein>
<organism>
    <name type="scientific">Schizosaccharomyces pombe (strain 972 / ATCC 24843)</name>
    <name type="common">Fission yeast</name>
    <dbReference type="NCBI Taxonomy" id="284812"/>
    <lineage>
        <taxon>Eukaryota</taxon>
        <taxon>Fungi</taxon>
        <taxon>Dikarya</taxon>
        <taxon>Ascomycota</taxon>
        <taxon>Taphrinomycotina</taxon>
        <taxon>Schizosaccharomycetes</taxon>
        <taxon>Schizosaccharomycetales</taxon>
        <taxon>Schizosaccharomycetaceae</taxon>
        <taxon>Schizosaccharomyces</taxon>
    </lineage>
</organism>
<evidence type="ECO:0000250" key="1"/>
<evidence type="ECO:0000255" key="2"/>
<evidence type="ECO:0000255" key="3">
    <source>
        <dbReference type="PROSITE-ProRule" id="PRU10138"/>
    </source>
</evidence>
<evidence type="ECO:0000256" key="4">
    <source>
        <dbReference type="SAM" id="MobiDB-lite"/>
    </source>
</evidence>
<evidence type="ECO:0000269" key="5">
    <source>
    </source>
</evidence>
<evidence type="ECO:0000305" key="6"/>
<proteinExistence type="inferred from homology"/>
<keyword id="KW-0067">ATP-binding</keyword>
<keyword id="KW-0143">Chaperone</keyword>
<keyword id="KW-0256">Endoplasmic reticulum</keyword>
<keyword id="KW-0325">Glycoprotein</keyword>
<keyword id="KW-0378">Hydrolase</keyword>
<keyword id="KW-0547">Nucleotide-binding</keyword>
<keyword id="KW-1185">Reference proteome</keyword>
<keyword id="KW-0732">Signal</keyword>
<accession>Q10061</accession>
<dbReference type="EC" id="3.6.1.-"/>
<dbReference type="EMBL" id="CU329670">
    <property type="protein sequence ID" value="CAA92234.1"/>
    <property type="molecule type" value="Genomic_DNA"/>
</dbReference>
<dbReference type="PIR" id="T38089">
    <property type="entry name" value="T38089"/>
</dbReference>
<dbReference type="SMR" id="Q10061"/>
<dbReference type="BioGRID" id="278037">
    <property type="interactions" value="1"/>
</dbReference>
<dbReference type="FunCoup" id="Q10061">
    <property type="interactions" value="265"/>
</dbReference>
<dbReference type="STRING" id="284812.Q10061"/>
<dbReference type="iPTMnet" id="Q10061"/>
<dbReference type="SwissPalm" id="Q10061"/>
<dbReference type="PaxDb" id="4896-SPAC1F5.06.1"/>
<dbReference type="EnsemblFungi" id="SPAC1F5.06.1">
    <property type="protein sequence ID" value="SPAC1F5.06.1:pep"/>
    <property type="gene ID" value="SPAC1F5.06"/>
</dbReference>
<dbReference type="KEGG" id="spo:2541537"/>
<dbReference type="PomBase" id="SPAC1F5.06"/>
<dbReference type="VEuPathDB" id="FungiDB:SPAC1F5.06"/>
<dbReference type="eggNOG" id="KOG0104">
    <property type="taxonomic scope" value="Eukaryota"/>
</dbReference>
<dbReference type="HOGENOM" id="CLU_005965_5_0_1"/>
<dbReference type="InParanoid" id="Q10061"/>
<dbReference type="PhylomeDB" id="Q10061"/>
<dbReference type="PRO" id="PR:Q10061"/>
<dbReference type="Proteomes" id="UP000002485">
    <property type="component" value="Chromosome I"/>
</dbReference>
<dbReference type="GO" id="GO:0005783">
    <property type="term" value="C:endoplasmic reticulum"/>
    <property type="evidence" value="ECO:0007005"/>
    <property type="project" value="PomBase"/>
</dbReference>
<dbReference type="GO" id="GO:0034663">
    <property type="term" value="C:endoplasmic reticulum chaperone complex"/>
    <property type="evidence" value="ECO:0000318"/>
    <property type="project" value="GO_Central"/>
</dbReference>
<dbReference type="GO" id="GO:0005788">
    <property type="term" value="C:endoplasmic reticulum lumen"/>
    <property type="evidence" value="ECO:0000266"/>
    <property type="project" value="PomBase"/>
</dbReference>
<dbReference type="GO" id="GO:0000774">
    <property type="term" value="F:adenyl-nucleotide exchange factor activity"/>
    <property type="evidence" value="ECO:0000318"/>
    <property type="project" value="GO_Central"/>
</dbReference>
<dbReference type="GO" id="GO:0005524">
    <property type="term" value="F:ATP binding"/>
    <property type="evidence" value="ECO:0007669"/>
    <property type="project" value="UniProtKB-KW"/>
</dbReference>
<dbReference type="GO" id="GO:0016887">
    <property type="term" value="F:ATP hydrolysis activity"/>
    <property type="evidence" value="ECO:0007669"/>
    <property type="project" value="RHEA"/>
</dbReference>
<dbReference type="GO" id="GO:0140662">
    <property type="term" value="F:ATP-dependent protein folding chaperone"/>
    <property type="evidence" value="ECO:0007669"/>
    <property type="project" value="InterPro"/>
</dbReference>
<dbReference type="GO" id="GO:0034975">
    <property type="term" value="P:protein folding in endoplasmic reticulum"/>
    <property type="evidence" value="ECO:0000305"/>
    <property type="project" value="PomBase"/>
</dbReference>
<dbReference type="CDD" id="cd10230">
    <property type="entry name" value="ASKHA_NBD_HSP70_HYOU1"/>
    <property type="match status" value="1"/>
</dbReference>
<dbReference type="FunFam" id="1.20.1270.10:FF:000098">
    <property type="entry name" value="Heat shock protein 70 homolog lhs1"/>
    <property type="match status" value="1"/>
</dbReference>
<dbReference type="FunFam" id="3.30.30.30:FF:000004">
    <property type="entry name" value="hypoxia up-regulated protein 1"/>
    <property type="match status" value="1"/>
</dbReference>
<dbReference type="FunFam" id="3.90.640.10:FF:000003">
    <property type="entry name" value="Molecular chaperone DnaK"/>
    <property type="match status" value="1"/>
</dbReference>
<dbReference type="Gene3D" id="1.20.1270.10">
    <property type="match status" value="1"/>
</dbReference>
<dbReference type="Gene3D" id="3.30.30.30">
    <property type="match status" value="1"/>
</dbReference>
<dbReference type="Gene3D" id="3.30.420.40">
    <property type="match status" value="2"/>
</dbReference>
<dbReference type="Gene3D" id="3.90.640.10">
    <property type="entry name" value="Actin, Chain A, domain 4"/>
    <property type="match status" value="1"/>
</dbReference>
<dbReference type="InterPro" id="IPR043129">
    <property type="entry name" value="ATPase_NBD"/>
</dbReference>
<dbReference type="InterPro" id="IPR018181">
    <property type="entry name" value="Heat_shock_70_CS"/>
</dbReference>
<dbReference type="InterPro" id="IPR029048">
    <property type="entry name" value="HSP70_C_sf"/>
</dbReference>
<dbReference type="InterPro" id="IPR013126">
    <property type="entry name" value="Hsp_70_fam"/>
</dbReference>
<dbReference type="PANTHER" id="PTHR45639">
    <property type="entry name" value="HSC70CB, ISOFORM G-RELATED"/>
    <property type="match status" value="1"/>
</dbReference>
<dbReference type="PANTHER" id="PTHR45639:SF3">
    <property type="entry name" value="HYPOXIA UP-REGULATED PROTEIN 1"/>
    <property type="match status" value="1"/>
</dbReference>
<dbReference type="Pfam" id="PF00012">
    <property type="entry name" value="HSP70"/>
    <property type="match status" value="1"/>
</dbReference>
<dbReference type="PRINTS" id="PR00301">
    <property type="entry name" value="HEATSHOCK70"/>
</dbReference>
<dbReference type="SUPFAM" id="SSF53067">
    <property type="entry name" value="Actin-like ATPase domain"/>
    <property type="match status" value="2"/>
</dbReference>
<dbReference type="SUPFAM" id="SSF100934">
    <property type="entry name" value="Heat shock protein 70kD (HSP70), C-terminal subdomain"/>
    <property type="match status" value="1"/>
</dbReference>
<dbReference type="PROSITE" id="PS00014">
    <property type="entry name" value="ER_TARGET"/>
    <property type="match status" value="1"/>
</dbReference>
<dbReference type="PROSITE" id="PS00329">
    <property type="entry name" value="HSP70_2"/>
    <property type="match status" value="1"/>
</dbReference>
<dbReference type="PROSITE" id="PS01036">
    <property type="entry name" value="HSP70_3"/>
    <property type="match status" value="1"/>
</dbReference>
<name>LHS1_SCHPO</name>
<feature type="signal peptide" evidence="2">
    <location>
        <begin position="1"/>
        <end position="21"/>
    </location>
</feature>
<feature type="chain" id="PRO_0000013557" description="Heat shock protein 70 homolog lhs1">
    <location>
        <begin position="22"/>
        <end position="848"/>
    </location>
</feature>
<feature type="region of interest" description="Disordered" evidence="4">
    <location>
        <begin position="784"/>
        <end position="848"/>
    </location>
</feature>
<feature type="short sequence motif" description="Prevents secretion from ER" evidence="3">
    <location>
        <begin position="845"/>
        <end position="848"/>
    </location>
</feature>
<feature type="compositionally biased region" description="Polar residues" evidence="4">
    <location>
        <begin position="807"/>
        <end position="822"/>
    </location>
</feature>
<feature type="compositionally biased region" description="Polar residues" evidence="4">
    <location>
        <begin position="829"/>
        <end position="840"/>
    </location>
</feature>
<feature type="glycosylation site" description="N-linked (GlcNAc...) asparagine" evidence="2">
    <location>
        <position position="134"/>
    </location>
</feature>
<feature type="glycosylation site" description="N-linked (GlcNAc...) asparagine" evidence="2">
    <location>
        <position position="247"/>
    </location>
</feature>
<feature type="glycosylation site" description="N-linked (GlcNAc...) asparagine" evidence="2">
    <location>
        <position position="359"/>
    </location>
</feature>
<feature type="glycosylation site" description="N-linked (GlcNAc...) asparagine" evidence="2">
    <location>
        <position position="457"/>
    </location>
</feature>
<feature type="glycosylation site" description="N-linked (GlcNAc...) asparagine" evidence="2">
    <location>
        <position position="462"/>
    </location>
</feature>
<feature type="glycosylation site" description="N-linked (GlcNAc...) asparagine" evidence="2">
    <location>
        <position position="488"/>
    </location>
</feature>
<feature type="glycosylation site" description="N-linked (GlcNAc...) asparagine" evidence="2">
    <location>
        <position position="555"/>
    </location>
</feature>
<feature type="glycosylation site" description="N-linked (GlcNAc...) asparagine" evidence="2">
    <location>
        <position position="632"/>
    </location>
</feature>
<feature type="glycosylation site" description="N-linked (GlcNAc...) asparagine" evidence="2">
    <location>
        <position position="678"/>
    </location>
</feature>
<feature type="glycosylation site" description="N-linked (GlcNAc...) asparagine" evidence="2">
    <location>
        <position position="733"/>
    </location>
</feature>
<feature type="glycosylation site" description="N-linked (GlcNAc...) asparagine" evidence="2">
    <location>
        <position position="817"/>
    </location>
</feature>
<gene>
    <name type="ORF">SPAC1F5.06</name>
</gene>
<comment type="function">
    <text evidence="1">Chaperone required for protein translocation and folding in the endoplasmic reticulum.</text>
</comment>
<comment type="catalytic activity">
    <reaction>
        <text>ATP + H2O = ADP + phosphate + H(+)</text>
        <dbReference type="Rhea" id="RHEA:13065"/>
        <dbReference type="ChEBI" id="CHEBI:15377"/>
        <dbReference type="ChEBI" id="CHEBI:15378"/>
        <dbReference type="ChEBI" id="CHEBI:30616"/>
        <dbReference type="ChEBI" id="CHEBI:43474"/>
        <dbReference type="ChEBI" id="CHEBI:456216"/>
    </reaction>
</comment>
<comment type="subcellular location">
    <subcellularLocation>
        <location evidence="3 5">Endoplasmic reticulum lumen</location>
    </subcellularLocation>
</comment>
<comment type="similarity">
    <text evidence="6">Belongs to the heat shock protein 70 family.</text>
</comment>
<reference key="1">
    <citation type="journal article" date="2002" name="Nature">
        <title>The genome sequence of Schizosaccharomyces pombe.</title>
        <authorList>
            <person name="Wood V."/>
            <person name="Gwilliam R."/>
            <person name="Rajandream M.A."/>
            <person name="Lyne M.H."/>
            <person name="Lyne R."/>
            <person name="Stewart A."/>
            <person name="Sgouros J.G."/>
            <person name="Peat N."/>
            <person name="Hayles J."/>
            <person name="Baker S.G."/>
            <person name="Basham D."/>
            <person name="Bowman S."/>
            <person name="Brooks K."/>
            <person name="Brown D."/>
            <person name="Brown S."/>
            <person name="Chillingworth T."/>
            <person name="Churcher C.M."/>
            <person name="Collins M."/>
            <person name="Connor R."/>
            <person name="Cronin A."/>
            <person name="Davis P."/>
            <person name="Feltwell T."/>
            <person name="Fraser A."/>
            <person name="Gentles S."/>
            <person name="Goble A."/>
            <person name="Hamlin N."/>
            <person name="Harris D.E."/>
            <person name="Hidalgo J."/>
            <person name="Hodgson G."/>
            <person name="Holroyd S."/>
            <person name="Hornsby T."/>
            <person name="Howarth S."/>
            <person name="Huckle E.J."/>
            <person name="Hunt S."/>
            <person name="Jagels K."/>
            <person name="James K.D."/>
            <person name="Jones L."/>
            <person name="Jones M."/>
            <person name="Leather S."/>
            <person name="McDonald S."/>
            <person name="McLean J."/>
            <person name="Mooney P."/>
            <person name="Moule S."/>
            <person name="Mungall K.L."/>
            <person name="Murphy L.D."/>
            <person name="Niblett D."/>
            <person name="Odell C."/>
            <person name="Oliver K."/>
            <person name="O'Neil S."/>
            <person name="Pearson D."/>
            <person name="Quail M.A."/>
            <person name="Rabbinowitsch E."/>
            <person name="Rutherford K.M."/>
            <person name="Rutter S."/>
            <person name="Saunders D."/>
            <person name="Seeger K."/>
            <person name="Sharp S."/>
            <person name="Skelton J."/>
            <person name="Simmonds M.N."/>
            <person name="Squares R."/>
            <person name="Squares S."/>
            <person name="Stevens K."/>
            <person name="Taylor K."/>
            <person name="Taylor R.G."/>
            <person name="Tivey A."/>
            <person name="Walsh S.V."/>
            <person name="Warren T."/>
            <person name="Whitehead S."/>
            <person name="Woodward J.R."/>
            <person name="Volckaert G."/>
            <person name="Aert R."/>
            <person name="Robben J."/>
            <person name="Grymonprez B."/>
            <person name="Weltjens I."/>
            <person name="Vanstreels E."/>
            <person name="Rieger M."/>
            <person name="Schaefer M."/>
            <person name="Mueller-Auer S."/>
            <person name="Gabel C."/>
            <person name="Fuchs M."/>
            <person name="Duesterhoeft A."/>
            <person name="Fritzc C."/>
            <person name="Holzer E."/>
            <person name="Moestl D."/>
            <person name="Hilbert H."/>
            <person name="Borzym K."/>
            <person name="Langer I."/>
            <person name="Beck A."/>
            <person name="Lehrach H."/>
            <person name="Reinhardt R."/>
            <person name="Pohl T.M."/>
            <person name="Eger P."/>
            <person name="Zimmermann W."/>
            <person name="Wedler H."/>
            <person name="Wambutt R."/>
            <person name="Purnelle B."/>
            <person name="Goffeau A."/>
            <person name="Cadieu E."/>
            <person name="Dreano S."/>
            <person name="Gloux S."/>
            <person name="Lelaure V."/>
            <person name="Mottier S."/>
            <person name="Galibert F."/>
            <person name="Aves S.J."/>
            <person name="Xiang Z."/>
            <person name="Hunt C."/>
            <person name="Moore K."/>
            <person name="Hurst S.M."/>
            <person name="Lucas M."/>
            <person name="Rochet M."/>
            <person name="Gaillardin C."/>
            <person name="Tallada V.A."/>
            <person name="Garzon A."/>
            <person name="Thode G."/>
            <person name="Daga R.R."/>
            <person name="Cruzado L."/>
            <person name="Jimenez J."/>
            <person name="Sanchez M."/>
            <person name="del Rey F."/>
            <person name="Benito J."/>
            <person name="Dominguez A."/>
            <person name="Revuelta J.L."/>
            <person name="Moreno S."/>
            <person name="Armstrong J."/>
            <person name="Forsburg S.L."/>
            <person name="Cerutti L."/>
            <person name="Lowe T."/>
            <person name="McCombie W.R."/>
            <person name="Paulsen I."/>
            <person name="Potashkin J."/>
            <person name="Shpakovski G.V."/>
            <person name="Ussery D."/>
            <person name="Barrell B.G."/>
            <person name="Nurse P."/>
        </authorList>
    </citation>
    <scope>NUCLEOTIDE SEQUENCE [LARGE SCALE GENOMIC DNA]</scope>
    <source>
        <strain>972 / ATCC 24843</strain>
    </source>
</reference>
<reference key="2">
    <citation type="journal article" date="2006" name="Nat. Biotechnol.">
        <title>ORFeome cloning and global analysis of protein localization in the fission yeast Schizosaccharomyces pombe.</title>
        <authorList>
            <person name="Matsuyama A."/>
            <person name="Arai R."/>
            <person name="Yashiroda Y."/>
            <person name="Shirai A."/>
            <person name="Kamata A."/>
            <person name="Sekido S."/>
            <person name="Kobayashi Y."/>
            <person name="Hashimoto A."/>
            <person name="Hamamoto M."/>
            <person name="Hiraoka Y."/>
            <person name="Horinouchi S."/>
            <person name="Yoshida M."/>
        </authorList>
    </citation>
    <scope>SUBCELLULAR LOCATION [LARGE SCALE ANALYSIS]</scope>
</reference>
<sequence length="848" mass="94898">MKRSVLTIILFFSCQFWHAFASSVLAIDYGTEWTKAALIKPGIPLEIVLTKDTRRKEQSAVAFKGNERIFGVDASNLATRFPAHSIRNVKELLDTAGLESVLVQKYQSSYPAIQLVENEETTSGISFVISDEENYSLEEIIAMTMEHYISLAEEMAHEKITDLVLTVPPHFNELQRSILLEAARILNKHVLALIDDNVAVAIEYSLSRSFSTDPTYNIIYDSGSGSTSATVISFDTVEGSSLGKKQNITRIRALASGFTLKLSGNEINRKLIGFMKNSFYQKHGIDLSHNHRALARLEKEALRVKHILSANSEAIASIEELADGIDFRLKITRSVLESLCKDMEDAAVEPINKALKKANLTFSEINSIILFGGASRIPFIQSTLADYVSSDKISKNVNADEASVKGAAFYGASLTKSFRVKPLIVQDIINYPYLLSLGTSEYIVALPDSTPYGMQHNVTIHNVSTIGKHPSFPLSNNGELIGEFTLSNITDVEKVCACSNKNIQISFSSDRTKGILVPLSAIMTCEHGELSSKHKLGDRVKSLFGSHDESGLRNNESYPIGFTYKKYGEMSDNALRLASAKLERRLQIDKSKAAHDNALNELETLLYRAQAMVDDDEFLEFANPEETKILKNDSVESYDWLIEYGSQSPTSEVTDRYKKLDDTLKSISFRFDQAKQFNTSLENFKNALERAESLLTNFDVPDYPLNVYDEKDVKRVNSLRGTSYKKLGNQYYNDTQWLKDNLDSHLSHTLSEDPLIKVEELEEKAKRLQELTYEYLRRSLQQPKLKAKKGASSSSTAESKVEDETFTNDIEPTTALNSTSTQETEKSRASVTQRPSSLQQEIDDSDEL</sequence>